<reference key="1">
    <citation type="journal article" date="2005" name="Genome Res.">
        <title>Sequence, annotation, and analysis of synteny between rice chromosome 3 and diverged grass species.</title>
        <authorList>
            <consortium name="The rice chromosome 3 sequencing consortium"/>
            <person name="Buell C.R."/>
            <person name="Yuan Q."/>
            <person name="Ouyang S."/>
            <person name="Liu J."/>
            <person name="Zhu W."/>
            <person name="Wang A."/>
            <person name="Maiti R."/>
            <person name="Haas B."/>
            <person name="Wortman J."/>
            <person name="Pertea M."/>
            <person name="Jones K.M."/>
            <person name="Kim M."/>
            <person name="Overton L."/>
            <person name="Tsitrin T."/>
            <person name="Fadrosh D."/>
            <person name="Bera J."/>
            <person name="Weaver B."/>
            <person name="Jin S."/>
            <person name="Johri S."/>
            <person name="Reardon M."/>
            <person name="Webb K."/>
            <person name="Hill J."/>
            <person name="Moffat K."/>
            <person name="Tallon L."/>
            <person name="Van Aken S."/>
            <person name="Lewis M."/>
            <person name="Utterback T."/>
            <person name="Feldblyum T."/>
            <person name="Zismann V."/>
            <person name="Iobst S."/>
            <person name="Hsiao J."/>
            <person name="de Vazeille A.R."/>
            <person name="Salzberg S.L."/>
            <person name="White O."/>
            <person name="Fraser C.M."/>
            <person name="Yu Y."/>
            <person name="Kim H."/>
            <person name="Rambo T."/>
            <person name="Currie J."/>
            <person name="Collura K."/>
            <person name="Kernodle-Thompson S."/>
            <person name="Wei F."/>
            <person name="Kudrna K."/>
            <person name="Ammiraju J.S.S."/>
            <person name="Luo M."/>
            <person name="Goicoechea J.L."/>
            <person name="Wing R.A."/>
            <person name="Henry D."/>
            <person name="Oates R."/>
            <person name="Palmer M."/>
            <person name="Pries G."/>
            <person name="Saski C."/>
            <person name="Simmons J."/>
            <person name="Soderlund C."/>
            <person name="Nelson W."/>
            <person name="de la Bastide M."/>
            <person name="Spiegel L."/>
            <person name="Nascimento L."/>
            <person name="Huang E."/>
            <person name="Preston R."/>
            <person name="Zutavern T."/>
            <person name="Palmer L."/>
            <person name="O'Shaughnessy A."/>
            <person name="Dike S."/>
            <person name="McCombie W.R."/>
            <person name="Minx P."/>
            <person name="Cordum H."/>
            <person name="Wilson R."/>
            <person name="Jin W."/>
            <person name="Lee H.R."/>
            <person name="Jiang J."/>
            <person name="Jackson S."/>
        </authorList>
    </citation>
    <scope>NUCLEOTIDE SEQUENCE [LARGE SCALE GENOMIC DNA]</scope>
    <source>
        <strain>cv. Nipponbare</strain>
    </source>
</reference>
<reference key="2">
    <citation type="journal article" date="2005" name="Nature">
        <title>The map-based sequence of the rice genome.</title>
        <authorList>
            <consortium name="International rice genome sequencing project (IRGSP)"/>
        </authorList>
    </citation>
    <scope>NUCLEOTIDE SEQUENCE [LARGE SCALE GENOMIC DNA]</scope>
    <source>
        <strain>cv. Nipponbare</strain>
    </source>
</reference>
<reference key="3">
    <citation type="journal article" date="2008" name="Nucleic Acids Res.">
        <title>The rice annotation project database (RAP-DB): 2008 update.</title>
        <authorList>
            <consortium name="The rice annotation project (RAP)"/>
        </authorList>
    </citation>
    <scope>GENOME REANNOTATION</scope>
    <source>
        <strain>cv. Nipponbare</strain>
    </source>
</reference>
<reference key="4">
    <citation type="journal article" date="2013" name="Rice">
        <title>Improvement of the Oryza sativa Nipponbare reference genome using next generation sequence and optical map data.</title>
        <authorList>
            <person name="Kawahara Y."/>
            <person name="de la Bastide M."/>
            <person name="Hamilton J.P."/>
            <person name="Kanamori H."/>
            <person name="McCombie W.R."/>
            <person name="Ouyang S."/>
            <person name="Schwartz D.C."/>
            <person name="Tanaka T."/>
            <person name="Wu J."/>
            <person name="Zhou S."/>
            <person name="Childs K.L."/>
            <person name="Davidson R.M."/>
            <person name="Lin H."/>
            <person name="Quesada-Ocampo L."/>
            <person name="Vaillancourt B."/>
            <person name="Sakai H."/>
            <person name="Lee S.S."/>
            <person name="Kim J."/>
            <person name="Numa H."/>
            <person name="Itoh T."/>
            <person name="Buell C.R."/>
            <person name="Matsumoto T."/>
        </authorList>
    </citation>
    <scope>GENOME REANNOTATION</scope>
    <source>
        <strain>cv. Nipponbare</strain>
    </source>
</reference>
<reference key="5">
    <citation type="journal article" date="2003" name="Science">
        <title>Collection, mapping, and annotation of over 28,000 cDNA clones from japonica rice.</title>
        <authorList>
            <consortium name="The rice full-length cDNA consortium"/>
        </authorList>
    </citation>
    <scope>NUCLEOTIDE SEQUENCE [LARGE SCALE MRNA]</scope>
    <source>
        <strain>cv. Nipponbare</strain>
    </source>
</reference>
<reference key="6">
    <citation type="journal article" date="2006" name="J. Plant Physiol.">
        <title>Comparative study of rice and Arabidopsis actin-depolymerizing factors gene families.</title>
        <authorList>
            <person name="Feng Y."/>
            <person name="Liu Q."/>
            <person name="Xue Q."/>
        </authorList>
    </citation>
    <scope>GENE FAMILY</scope>
</reference>
<reference key="7">
    <citation type="journal article" date="2013" name="Plant J.">
        <title>A rice lectin receptor-like kinase that is involved in innate immune responses also contributes to seed germination.</title>
        <authorList>
            <person name="Cheng X."/>
            <person name="Wu Y."/>
            <person name="Guo J."/>
            <person name="Du B."/>
            <person name="Chen R."/>
            <person name="Zhu L."/>
            <person name="He G."/>
        </authorList>
    </citation>
    <scope>FUNCTION</scope>
    <scope>INTERACTION WITH LECRK1</scope>
    <scope>DISRUPTION PHENOTYPE</scope>
    <source>
        <strain>cv. Dongjin</strain>
    </source>
</reference>
<comment type="function">
    <text evidence="1 3">Actin-depolymerizing protein. Severs actin filaments (F-actin) and binds to actin monomers (By similarity). Involved in innate immunity. Required for the expression of defense-related genes PR1A, LOX2 and CHS1 upon biotic stresses. Required for basal resistance to the fungal blast (Magnaporthe grisea), bacterial blight (Xanthomonas oryzae pv. oryzae, Xoo) and the herbivorous insect brown planthopper (Nilaparvata lugens, BPH). Involved in the promotion of seed germination. Required for the expression of alpha-amylase genes during seed germination (PubMed:24033867).</text>
</comment>
<comment type="subunit">
    <text evidence="3">Interacts with LECRK1 (via kinase domain).</text>
</comment>
<comment type="subcellular location">
    <subcellularLocation>
        <location evidence="1">Cytoplasm</location>
        <location evidence="1">Cytoskeleton</location>
    </subcellularLocation>
</comment>
<comment type="disruption phenotype">
    <text evidence="3">Decreased germination rates due to decreased alpha-amylase activity during seed germination. Increased susceptibility to infection by the fungal blast (Magnaporthe grisea), bacterial blight (Xanthomonas oryzae pv. oryzae, Xoo) and the herbivorous insect brown planthopper (Nilaparvata lugens, BPH). Almost no induction of the defense-related genes PR1A, LOX2 and CHS1 after exposure to biotic stresses.</text>
</comment>
<comment type="similarity">
    <text evidence="4">Belongs to the actin-binding proteins ADF family.</text>
</comment>
<feature type="chain" id="PRO_0000278107" description="Actin-depolymerizing factor 4">
    <location>
        <begin position="1"/>
        <end position="139"/>
    </location>
</feature>
<feature type="domain" description="ADF-H" evidence="2">
    <location>
        <begin position="5"/>
        <end position="139"/>
    </location>
</feature>
<dbReference type="EMBL" id="AC104433">
    <property type="protein sequence ID" value="AAO65864.1"/>
    <property type="molecule type" value="Genomic_DNA"/>
</dbReference>
<dbReference type="EMBL" id="DP000009">
    <property type="protein sequence ID" value="ABF99588.1"/>
    <property type="molecule type" value="Genomic_DNA"/>
</dbReference>
<dbReference type="EMBL" id="AP008209">
    <property type="protein sequence ID" value="BAF13635.1"/>
    <property type="molecule type" value="Genomic_DNA"/>
</dbReference>
<dbReference type="EMBL" id="AP014959">
    <property type="protein sequence ID" value="BAS87084.1"/>
    <property type="molecule type" value="Genomic_DNA"/>
</dbReference>
<dbReference type="EMBL" id="AK058941">
    <property type="protein sequence ID" value="BAG86847.1"/>
    <property type="molecule type" value="mRNA"/>
</dbReference>
<dbReference type="RefSeq" id="XP_015632174.1">
    <property type="nucleotide sequence ID" value="XM_015776688.1"/>
</dbReference>
<dbReference type="SMR" id="Q84TB3"/>
<dbReference type="FunCoup" id="Q84TB3">
    <property type="interactions" value="2295"/>
</dbReference>
<dbReference type="STRING" id="39947.Q84TB3"/>
<dbReference type="PaxDb" id="39947-Q84TB3"/>
<dbReference type="EnsemblPlants" id="Os03t0820600-01">
    <property type="protein sequence ID" value="Os03t0820600-01"/>
    <property type="gene ID" value="Os03g0820600"/>
</dbReference>
<dbReference type="Gramene" id="Os03t0820600-01">
    <property type="protein sequence ID" value="Os03t0820600-01"/>
    <property type="gene ID" value="Os03g0820600"/>
</dbReference>
<dbReference type="KEGG" id="dosa:Os03g0820600"/>
<dbReference type="eggNOG" id="KOG1735">
    <property type="taxonomic scope" value="Eukaryota"/>
</dbReference>
<dbReference type="HOGENOM" id="CLU_094004_2_2_1"/>
<dbReference type="InParanoid" id="Q84TB3"/>
<dbReference type="OMA" id="YLTRQMS"/>
<dbReference type="OrthoDB" id="10249245at2759"/>
<dbReference type="Proteomes" id="UP000000763">
    <property type="component" value="Chromosome 3"/>
</dbReference>
<dbReference type="Proteomes" id="UP000059680">
    <property type="component" value="Chromosome 3"/>
</dbReference>
<dbReference type="ExpressionAtlas" id="Q84TB3">
    <property type="expression patterns" value="baseline and differential"/>
</dbReference>
<dbReference type="GO" id="GO:0015629">
    <property type="term" value="C:actin cytoskeleton"/>
    <property type="evidence" value="ECO:0000318"/>
    <property type="project" value="GO_Central"/>
</dbReference>
<dbReference type="GO" id="GO:0005737">
    <property type="term" value="C:cytoplasm"/>
    <property type="evidence" value="ECO:0000318"/>
    <property type="project" value="GO_Central"/>
</dbReference>
<dbReference type="GO" id="GO:0051015">
    <property type="term" value="F:actin filament binding"/>
    <property type="evidence" value="ECO:0000318"/>
    <property type="project" value="GO_Central"/>
</dbReference>
<dbReference type="GO" id="GO:0030042">
    <property type="term" value="P:actin filament depolymerization"/>
    <property type="evidence" value="ECO:0000318"/>
    <property type="project" value="GO_Central"/>
</dbReference>
<dbReference type="GO" id="GO:0006952">
    <property type="term" value="P:defense response"/>
    <property type="evidence" value="ECO:0007669"/>
    <property type="project" value="UniProtKB-KW"/>
</dbReference>
<dbReference type="CDD" id="cd11286">
    <property type="entry name" value="ADF_cofilin_like"/>
    <property type="match status" value="1"/>
</dbReference>
<dbReference type="Gene3D" id="3.40.20.10">
    <property type="entry name" value="Severin"/>
    <property type="match status" value="1"/>
</dbReference>
<dbReference type="InterPro" id="IPR002108">
    <property type="entry name" value="ADF-H"/>
</dbReference>
<dbReference type="InterPro" id="IPR029006">
    <property type="entry name" value="ADF-H/Gelsolin-like_dom_sf"/>
</dbReference>
<dbReference type="InterPro" id="IPR017904">
    <property type="entry name" value="ADF/Cofilin"/>
</dbReference>
<dbReference type="PANTHER" id="PTHR11913">
    <property type="entry name" value="COFILIN-RELATED"/>
    <property type="match status" value="1"/>
</dbReference>
<dbReference type="Pfam" id="PF00241">
    <property type="entry name" value="Cofilin_ADF"/>
    <property type="match status" value="1"/>
</dbReference>
<dbReference type="SMART" id="SM00102">
    <property type="entry name" value="ADF"/>
    <property type="match status" value="1"/>
</dbReference>
<dbReference type="SUPFAM" id="SSF55753">
    <property type="entry name" value="Actin depolymerizing proteins"/>
    <property type="match status" value="1"/>
</dbReference>
<dbReference type="PROSITE" id="PS51263">
    <property type="entry name" value="ADF_H"/>
    <property type="match status" value="1"/>
</dbReference>
<evidence type="ECO:0000250" key="1">
    <source>
        <dbReference type="UniProtKB" id="Q9ZSK3"/>
    </source>
</evidence>
<evidence type="ECO:0000255" key="2">
    <source>
        <dbReference type="PROSITE-ProRule" id="PRU00599"/>
    </source>
</evidence>
<evidence type="ECO:0000269" key="3">
    <source>
    </source>
</evidence>
<evidence type="ECO:0000305" key="4"/>
<gene>
    <name type="primary">ADF4</name>
    <name type="ordered locus">Os03g0820600</name>
    <name type="ordered locus">LOC_Os03g60590</name>
    <name type="ORF">OJ1754_E06.22</name>
</gene>
<accession>Q84TB3</accession>
<accession>B7E3A0</accession>
<name>ADF4_ORYSJ</name>
<sequence length="139" mass="15946">MANSSSGVAIHDDCKLKFNELQSKRMHRFITFMMDNKGKEIIVDKIGDRTTSYEDFTSSLPEGDCRFAIYDFDFLTAEDVPKSRIFYILWSPDNAKVRSKMLYASSNERFKKELNGIQLEVQATDAGEISLDALKDRVK</sequence>
<organism>
    <name type="scientific">Oryza sativa subsp. japonica</name>
    <name type="common">Rice</name>
    <dbReference type="NCBI Taxonomy" id="39947"/>
    <lineage>
        <taxon>Eukaryota</taxon>
        <taxon>Viridiplantae</taxon>
        <taxon>Streptophyta</taxon>
        <taxon>Embryophyta</taxon>
        <taxon>Tracheophyta</taxon>
        <taxon>Spermatophyta</taxon>
        <taxon>Magnoliopsida</taxon>
        <taxon>Liliopsida</taxon>
        <taxon>Poales</taxon>
        <taxon>Poaceae</taxon>
        <taxon>BOP clade</taxon>
        <taxon>Oryzoideae</taxon>
        <taxon>Oryzeae</taxon>
        <taxon>Oryzinae</taxon>
        <taxon>Oryza</taxon>
        <taxon>Oryza sativa</taxon>
    </lineage>
</organism>
<keyword id="KW-0009">Actin-binding</keyword>
<keyword id="KW-0963">Cytoplasm</keyword>
<keyword id="KW-0206">Cytoskeleton</keyword>
<keyword id="KW-0611">Plant defense</keyword>
<keyword id="KW-1185">Reference proteome</keyword>
<proteinExistence type="evidence at protein level"/>
<protein>
    <recommendedName>
        <fullName>Actin-depolymerizing factor 4</fullName>
        <shortName>ADF-4</shortName>
        <shortName>OsADF4</shortName>
    </recommendedName>
</protein>